<accession>B5XP00</accession>
<protein>
    <recommendedName>
        <fullName evidence="8">FAD:protein FMN transferase</fullName>
        <ecNumber evidence="1">2.7.1.180</ecNumber>
    </recommendedName>
    <alternativeName>
        <fullName evidence="8">Flavin transferase</fullName>
    </alternativeName>
</protein>
<evidence type="ECO:0000250" key="1">
    <source>
        <dbReference type="UniProtKB" id="A5F5Y3"/>
    </source>
</evidence>
<evidence type="ECO:0000250" key="2">
    <source>
        <dbReference type="UniProtKB" id="O83774"/>
    </source>
</evidence>
<evidence type="ECO:0000250" key="3">
    <source>
        <dbReference type="UniProtKB" id="P0AB85"/>
    </source>
</evidence>
<evidence type="ECO:0000250" key="4">
    <source>
        <dbReference type="UniProtKB" id="P41780"/>
    </source>
</evidence>
<evidence type="ECO:0000255" key="5">
    <source>
        <dbReference type="PROSITE-ProRule" id="PRU00303"/>
    </source>
</evidence>
<evidence type="ECO:0000269" key="6">
    <source>
    </source>
</evidence>
<evidence type="ECO:0000269" key="7">
    <source>
    </source>
</evidence>
<evidence type="ECO:0000303" key="8">
    <source>
    </source>
</evidence>
<evidence type="ECO:0000305" key="9"/>
<evidence type="ECO:0000312" key="10">
    <source>
        <dbReference type="EMBL" id="ACI11195.1"/>
    </source>
</evidence>
<comment type="function">
    <text evidence="1 7 8">Flavin transferase that catalyzes the transfer of the FMN moiety of FAD and its covalent binding to the hydroxyl group of a threonine residue in a target flavoprotein such as NqrB and NqrC, two subunits of the NQR complex.</text>
</comment>
<comment type="catalytic activity">
    <reaction evidence="1">
        <text>L-threonyl-[protein] + FAD = FMN-L-threonyl-[protein] + AMP + H(+)</text>
        <dbReference type="Rhea" id="RHEA:36847"/>
        <dbReference type="Rhea" id="RHEA-COMP:11060"/>
        <dbReference type="Rhea" id="RHEA-COMP:11061"/>
        <dbReference type="ChEBI" id="CHEBI:15378"/>
        <dbReference type="ChEBI" id="CHEBI:30013"/>
        <dbReference type="ChEBI" id="CHEBI:57692"/>
        <dbReference type="ChEBI" id="CHEBI:74257"/>
        <dbReference type="ChEBI" id="CHEBI:456215"/>
        <dbReference type="EC" id="2.7.1.180"/>
    </reaction>
</comment>
<comment type="cofactor">
    <cofactor evidence="1">
        <name>Mg(2+)</name>
        <dbReference type="ChEBI" id="CHEBI:18420"/>
    </cofactor>
</comment>
<comment type="subcellular location">
    <subcellularLocation>
        <location evidence="4 5">Cell inner membrane</location>
        <topology evidence="4 5">Lipid-anchor</topology>
        <orientation evidence="4 7">Periplasmic side</orientation>
    </subcellularLocation>
</comment>
<comment type="disruption phenotype">
    <text evidence="6 7">Inactivation of this gene results in a complete loss of the quinone reductase activity of the Na(+)-NQR complex, but does not affect the NADH dehydrogenase activity. Cytoplasmic fumarate reductase activity displayed by KPK_2907, which contains a covalently bound FMN, remains unchanged in mutant cells.</text>
</comment>
<comment type="similarity">
    <text evidence="9">Belongs to the ApbE family.</text>
</comment>
<name>APBE1_KLEP3</name>
<reference key="1">
    <citation type="journal article" date="2008" name="PLoS Genet.">
        <title>Complete genome sequence of the N2-fixing broad host range endophyte Klebsiella pneumoniae 342 and virulence predictions verified in mice.</title>
        <authorList>
            <person name="Fouts D.E."/>
            <person name="Tyler H.L."/>
            <person name="DeBoy R.T."/>
            <person name="Daugherty S."/>
            <person name="Ren Q."/>
            <person name="Badger J.H."/>
            <person name="Durkin A.S."/>
            <person name="Huot H."/>
            <person name="Shrivastava S."/>
            <person name="Kothari S."/>
            <person name="Dodson R.J."/>
            <person name="Mohamoud Y."/>
            <person name="Khouri H."/>
            <person name="Roesch L.F.W."/>
            <person name="Krogfelt K.A."/>
            <person name="Struve C."/>
            <person name="Triplett E.W."/>
            <person name="Methe B.A."/>
        </authorList>
    </citation>
    <scope>NUCLEOTIDE SEQUENCE [LARGE SCALE GENOMIC DNA]</scope>
    <source>
        <strain>342</strain>
    </source>
</reference>
<reference key="2">
    <citation type="journal article" date="2013" name="J. Biol. Chem.">
        <title>Alternative pyrimidine biosynthesis protein ApbE is a flavin transferase catalyzing covalent attachment of FMN to a threonine residue in bacterial flavoproteins.</title>
        <authorList>
            <person name="Bertsova Y.V."/>
            <person name="Fadeeva M.S."/>
            <person name="Kostyrko V.A."/>
            <person name="Serebryakova M.V."/>
            <person name="Baykov A.A."/>
            <person name="Bogachev A.V."/>
        </authorList>
    </citation>
    <scope>FUNCTION</scope>
    <scope>DISRUPTION PHENOTYPE</scope>
    <source>
        <strain>204</strain>
    </source>
</reference>
<reference key="3">
    <citation type="journal article" date="2014" name="Biochim. Biophys. Acta">
        <title>Localization-controlled specificity of FAD:threonine flavin transferases in Klebsiella pneumoniae and its implications for the mechanism of Na(+)-translocating NADH:quinone oxidoreductase.</title>
        <authorList>
            <person name="Bertsova Y.V."/>
            <person name="Kostyrko V.A."/>
            <person name="Baykov A.A."/>
            <person name="Bogachev A.V."/>
        </authorList>
    </citation>
    <scope>FUNCTION</scope>
    <scope>DISRUPTION PHENOTYPE</scope>
    <scope>SUBCELLULAR LOCATION</scope>
    <source>
        <strain>204</strain>
    </source>
</reference>
<gene>
    <name evidence="8" type="primary">apbE1</name>
    <name evidence="10" type="synonym">apbE</name>
    <name evidence="10" type="ordered locus">KPK_1517</name>
</gene>
<feature type="signal peptide" evidence="5">
    <location>
        <begin position="1"/>
        <end position="19"/>
    </location>
</feature>
<feature type="chain" id="PRO_0000430776" description="FAD:protein FMN transferase">
    <location>
        <begin position="20"/>
        <end position="350"/>
    </location>
</feature>
<feature type="binding site" evidence="4">
    <location>
        <position position="41"/>
    </location>
    <ligand>
        <name>FAD</name>
        <dbReference type="ChEBI" id="CHEBI:57692"/>
    </ligand>
</feature>
<feature type="binding site" evidence="4">
    <location>
        <position position="78"/>
    </location>
    <ligand>
        <name>FAD</name>
        <dbReference type="ChEBI" id="CHEBI:57692"/>
    </ligand>
</feature>
<feature type="binding site" evidence="4">
    <location>
        <begin position="119"/>
        <end position="121"/>
    </location>
    <ligand>
        <name>FAD</name>
        <dbReference type="ChEBI" id="CHEBI:57692"/>
    </ligand>
</feature>
<feature type="binding site" evidence="4">
    <location>
        <position position="181"/>
    </location>
    <ligand>
        <name>FAD</name>
        <dbReference type="ChEBI" id="CHEBI:57692"/>
    </ligand>
</feature>
<feature type="binding site" evidence="3">
    <location>
        <position position="184"/>
    </location>
    <ligand>
        <name>Mg(2+)</name>
        <dbReference type="ChEBI" id="CHEBI:18420"/>
    </ligand>
</feature>
<feature type="binding site" evidence="4">
    <location>
        <position position="187"/>
    </location>
    <ligand>
        <name>FAD</name>
        <dbReference type="ChEBI" id="CHEBI:57692"/>
    </ligand>
</feature>
<feature type="binding site" evidence="4">
    <location>
        <position position="272"/>
    </location>
    <ligand>
        <name>FAD</name>
        <dbReference type="ChEBI" id="CHEBI:57692"/>
    </ligand>
</feature>
<feature type="binding site" evidence="2">
    <location>
        <position position="298"/>
    </location>
    <ligand>
        <name>Mg(2+)</name>
        <dbReference type="ChEBI" id="CHEBI:18420"/>
    </ligand>
</feature>
<feature type="binding site" evidence="3">
    <location>
        <position position="301"/>
    </location>
    <ligand>
        <name>Mg(2+)</name>
        <dbReference type="ChEBI" id="CHEBI:18420"/>
    </ligand>
</feature>
<feature type="binding site" evidence="2">
    <location>
        <position position="302"/>
    </location>
    <ligand>
        <name>Mg(2+)</name>
        <dbReference type="ChEBI" id="CHEBI:18420"/>
    </ligand>
</feature>
<feature type="lipid moiety-binding region" description="N-palmitoyl cysteine" evidence="5">
    <location>
        <position position="20"/>
    </location>
</feature>
<feature type="lipid moiety-binding region" description="S-diacylglycerol cysteine" evidence="5">
    <location>
        <position position="20"/>
    </location>
</feature>
<keyword id="KW-0997">Cell inner membrane</keyword>
<keyword id="KW-1003">Cell membrane</keyword>
<keyword id="KW-0274">FAD</keyword>
<keyword id="KW-0285">Flavoprotein</keyword>
<keyword id="KW-0449">Lipoprotein</keyword>
<keyword id="KW-0460">Magnesium</keyword>
<keyword id="KW-0472">Membrane</keyword>
<keyword id="KW-0479">Metal-binding</keyword>
<keyword id="KW-0564">Palmitate</keyword>
<keyword id="KW-0732">Signal</keyword>
<keyword id="KW-0808">Transferase</keyword>
<dbReference type="EC" id="2.7.1.180" evidence="1"/>
<dbReference type="EMBL" id="CP000964">
    <property type="protein sequence ID" value="ACI11195.1"/>
    <property type="molecule type" value="Genomic_DNA"/>
</dbReference>
<dbReference type="SMR" id="B5XP00"/>
<dbReference type="KEGG" id="kpe:KPK_1517"/>
<dbReference type="HOGENOM" id="CLU_044403_0_0_6"/>
<dbReference type="BRENDA" id="2.7.1.180">
    <property type="organism ID" value="2814"/>
</dbReference>
<dbReference type="Proteomes" id="UP000001734">
    <property type="component" value="Chromosome"/>
</dbReference>
<dbReference type="GO" id="GO:0005886">
    <property type="term" value="C:plasma membrane"/>
    <property type="evidence" value="ECO:0007669"/>
    <property type="project" value="UniProtKB-SubCell"/>
</dbReference>
<dbReference type="GO" id="GO:0046872">
    <property type="term" value="F:metal ion binding"/>
    <property type="evidence" value="ECO:0007669"/>
    <property type="project" value="UniProtKB-KW"/>
</dbReference>
<dbReference type="GO" id="GO:0016740">
    <property type="term" value="F:transferase activity"/>
    <property type="evidence" value="ECO:0007669"/>
    <property type="project" value="UniProtKB-KW"/>
</dbReference>
<dbReference type="GO" id="GO:0017013">
    <property type="term" value="P:protein flavinylation"/>
    <property type="evidence" value="ECO:0000314"/>
    <property type="project" value="CACAO"/>
</dbReference>
<dbReference type="FunFam" id="3.10.520.10:FF:000001">
    <property type="entry name" value="FAD:protein FMN transferase"/>
    <property type="match status" value="1"/>
</dbReference>
<dbReference type="Gene3D" id="3.10.520.10">
    <property type="entry name" value="ApbE-like domains"/>
    <property type="match status" value="1"/>
</dbReference>
<dbReference type="InterPro" id="IPR024932">
    <property type="entry name" value="ApbE"/>
</dbReference>
<dbReference type="InterPro" id="IPR003374">
    <property type="entry name" value="ApbE-like_sf"/>
</dbReference>
<dbReference type="NCBIfam" id="NF007774">
    <property type="entry name" value="PRK10461.1"/>
    <property type="match status" value="1"/>
</dbReference>
<dbReference type="PANTHER" id="PTHR30040:SF2">
    <property type="entry name" value="FAD:PROTEIN FMN TRANSFERASE"/>
    <property type="match status" value="1"/>
</dbReference>
<dbReference type="PANTHER" id="PTHR30040">
    <property type="entry name" value="THIAMINE BIOSYNTHESIS LIPOPROTEIN APBE"/>
    <property type="match status" value="1"/>
</dbReference>
<dbReference type="Pfam" id="PF02424">
    <property type="entry name" value="ApbE"/>
    <property type="match status" value="1"/>
</dbReference>
<dbReference type="PIRSF" id="PIRSF006268">
    <property type="entry name" value="ApbE"/>
    <property type="match status" value="1"/>
</dbReference>
<dbReference type="SUPFAM" id="SSF143631">
    <property type="entry name" value="ApbE-like"/>
    <property type="match status" value="1"/>
</dbReference>
<dbReference type="PROSITE" id="PS51257">
    <property type="entry name" value="PROKAR_LIPOPROTEIN"/>
    <property type="match status" value="1"/>
</dbReference>
<proteinExistence type="inferred from homology"/>
<sequence>MDMTFFRAALLGACVLLSGCDSATTPASPASTATVLDGKTMGTFWRVSVIGVDEAKAEALRAKVQAQLDADDRLLSTWKNDSALMRFNHAADTRPWPVSEAMVDIVTLSLRIGAKTHGAMDITVGPLVNLWGFGPDKQPVTTPDAQAIAAAKARTGLQHLQVINQSGRQFLQKDIPDLFVDLSTVGEGYAADHLARLMEQEGISRYLVSVGGALVSRGMNGEGKPWRVAIQKPTDRENAVQAIVDINGHGISTSGSYRNYYELDGKRISHVIDPQTGQPITHKLVSVTVIAPTALEADGWDTGLMVLGPEKAQQVVREQGLAVYMIVKEGEGFKTWMSPQFRTFLVGEKN</sequence>
<organism>
    <name type="scientific">Klebsiella pneumoniae (strain 342)</name>
    <dbReference type="NCBI Taxonomy" id="507522"/>
    <lineage>
        <taxon>Bacteria</taxon>
        <taxon>Pseudomonadati</taxon>
        <taxon>Pseudomonadota</taxon>
        <taxon>Gammaproteobacteria</taxon>
        <taxon>Enterobacterales</taxon>
        <taxon>Enterobacteriaceae</taxon>
        <taxon>Klebsiella/Raoultella group</taxon>
        <taxon>Klebsiella</taxon>
        <taxon>Klebsiella pneumoniae complex</taxon>
    </lineage>
</organism>